<proteinExistence type="inferred from homology"/>
<name>PROB_BARHE</name>
<comment type="function">
    <text evidence="1">Catalyzes the transfer of a phosphate group to glutamate to form L-glutamate 5-phosphate.</text>
</comment>
<comment type="catalytic activity">
    <reaction evidence="1">
        <text>L-glutamate + ATP = L-glutamyl 5-phosphate + ADP</text>
        <dbReference type="Rhea" id="RHEA:14877"/>
        <dbReference type="ChEBI" id="CHEBI:29985"/>
        <dbReference type="ChEBI" id="CHEBI:30616"/>
        <dbReference type="ChEBI" id="CHEBI:58274"/>
        <dbReference type="ChEBI" id="CHEBI:456216"/>
        <dbReference type="EC" id="2.7.2.11"/>
    </reaction>
</comment>
<comment type="pathway">
    <text evidence="1">Amino-acid biosynthesis; L-proline biosynthesis; L-glutamate 5-semialdehyde from L-glutamate: step 1/2.</text>
</comment>
<comment type="subcellular location">
    <subcellularLocation>
        <location evidence="1">Cytoplasm</location>
    </subcellularLocation>
</comment>
<comment type="similarity">
    <text evidence="1">Belongs to the glutamate 5-kinase family.</text>
</comment>
<feature type="chain" id="PRO_0000109644" description="Glutamate 5-kinase">
    <location>
        <begin position="1"/>
        <end position="379"/>
    </location>
</feature>
<feature type="domain" description="PUA" evidence="1">
    <location>
        <begin position="282"/>
        <end position="359"/>
    </location>
</feature>
<feature type="binding site" evidence="1">
    <location>
        <position position="17"/>
    </location>
    <ligand>
        <name>ATP</name>
        <dbReference type="ChEBI" id="CHEBI:30616"/>
    </ligand>
</feature>
<feature type="binding site" evidence="1">
    <location>
        <position position="57"/>
    </location>
    <ligand>
        <name>substrate</name>
    </ligand>
</feature>
<feature type="binding site" evidence="1">
    <location>
        <position position="144"/>
    </location>
    <ligand>
        <name>substrate</name>
    </ligand>
</feature>
<feature type="binding site" evidence="1">
    <location>
        <position position="156"/>
    </location>
    <ligand>
        <name>substrate</name>
    </ligand>
</feature>
<feature type="binding site" evidence="1">
    <location>
        <begin position="176"/>
        <end position="177"/>
    </location>
    <ligand>
        <name>ATP</name>
        <dbReference type="ChEBI" id="CHEBI:30616"/>
    </ligand>
</feature>
<gene>
    <name evidence="1" type="primary">proB</name>
    <name type="ordered locus">BH01570</name>
</gene>
<reference key="1">
    <citation type="journal article" date="2004" name="Proc. Natl. Acad. Sci. U.S.A.">
        <title>The louse-borne human pathogen Bartonella quintana is a genomic derivative of the zoonotic agent Bartonella henselae.</title>
        <authorList>
            <person name="Alsmark U.C.M."/>
            <person name="Frank A.C."/>
            <person name="Karlberg E.O."/>
            <person name="Legault B.-A."/>
            <person name="Ardell D.H."/>
            <person name="Canbaeck B."/>
            <person name="Eriksson A.-S."/>
            <person name="Naeslund A.K."/>
            <person name="Handley S.A."/>
            <person name="Huvet M."/>
            <person name="La Scola B."/>
            <person name="Holmberg M."/>
            <person name="Andersson S.G.E."/>
        </authorList>
    </citation>
    <scope>NUCLEOTIDE SEQUENCE [LARGE SCALE GENOMIC DNA]</scope>
    <source>
        <strain>ATCC 49882 / DSM 28221 / CCUG 30454 / Houston 1</strain>
    </source>
</reference>
<accession>Q6G4Z1</accession>
<evidence type="ECO:0000255" key="1">
    <source>
        <dbReference type="HAMAP-Rule" id="MF_00456"/>
    </source>
</evidence>
<dbReference type="EC" id="2.7.2.11" evidence="1"/>
<dbReference type="EMBL" id="BX897699">
    <property type="protein sequence ID" value="CAF26969.1"/>
    <property type="molecule type" value="Genomic_DNA"/>
</dbReference>
<dbReference type="RefSeq" id="WP_011180110.1">
    <property type="nucleotide sequence ID" value="NZ_LRIJ02000001.1"/>
</dbReference>
<dbReference type="SMR" id="Q6G4Z1"/>
<dbReference type="PaxDb" id="283166-BH01570"/>
<dbReference type="EnsemblBacteria" id="CAF26969">
    <property type="protein sequence ID" value="CAF26969"/>
    <property type="gene ID" value="BH01570"/>
</dbReference>
<dbReference type="GeneID" id="92984825"/>
<dbReference type="KEGG" id="bhe:BH01570"/>
<dbReference type="eggNOG" id="COG0263">
    <property type="taxonomic scope" value="Bacteria"/>
</dbReference>
<dbReference type="OrthoDB" id="9804434at2"/>
<dbReference type="UniPathway" id="UPA00098">
    <property type="reaction ID" value="UER00359"/>
</dbReference>
<dbReference type="Proteomes" id="UP000000421">
    <property type="component" value="Chromosome"/>
</dbReference>
<dbReference type="GO" id="GO:0005829">
    <property type="term" value="C:cytosol"/>
    <property type="evidence" value="ECO:0007669"/>
    <property type="project" value="TreeGrafter"/>
</dbReference>
<dbReference type="GO" id="GO:0005524">
    <property type="term" value="F:ATP binding"/>
    <property type="evidence" value="ECO:0007669"/>
    <property type="project" value="UniProtKB-KW"/>
</dbReference>
<dbReference type="GO" id="GO:0004349">
    <property type="term" value="F:glutamate 5-kinase activity"/>
    <property type="evidence" value="ECO:0007669"/>
    <property type="project" value="UniProtKB-UniRule"/>
</dbReference>
<dbReference type="GO" id="GO:0003723">
    <property type="term" value="F:RNA binding"/>
    <property type="evidence" value="ECO:0007669"/>
    <property type="project" value="InterPro"/>
</dbReference>
<dbReference type="GO" id="GO:0055129">
    <property type="term" value="P:L-proline biosynthetic process"/>
    <property type="evidence" value="ECO:0007669"/>
    <property type="project" value="UniProtKB-UniRule"/>
</dbReference>
<dbReference type="CDD" id="cd04242">
    <property type="entry name" value="AAK_G5K_ProB"/>
    <property type="match status" value="1"/>
</dbReference>
<dbReference type="CDD" id="cd21157">
    <property type="entry name" value="PUA_G5K"/>
    <property type="match status" value="1"/>
</dbReference>
<dbReference type="FunFam" id="2.30.130.10:FF:000007">
    <property type="entry name" value="Glutamate 5-kinase"/>
    <property type="match status" value="1"/>
</dbReference>
<dbReference type="FunFam" id="3.40.1160.10:FF:000018">
    <property type="entry name" value="Glutamate 5-kinase"/>
    <property type="match status" value="1"/>
</dbReference>
<dbReference type="Gene3D" id="3.40.1160.10">
    <property type="entry name" value="Acetylglutamate kinase-like"/>
    <property type="match status" value="1"/>
</dbReference>
<dbReference type="Gene3D" id="2.30.130.10">
    <property type="entry name" value="PUA domain"/>
    <property type="match status" value="1"/>
</dbReference>
<dbReference type="HAMAP" id="MF_00456">
    <property type="entry name" value="ProB"/>
    <property type="match status" value="1"/>
</dbReference>
<dbReference type="InterPro" id="IPR036393">
    <property type="entry name" value="AceGlu_kinase-like_sf"/>
</dbReference>
<dbReference type="InterPro" id="IPR001048">
    <property type="entry name" value="Asp/Glu/Uridylate_kinase"/>
</dbReference>
<dbReference type="InterPro" id="IPR041739">
    <property type="entry name" value="G5K_ProB"/>
</dbReference>
<dbReference type="InterPro" id="IPR001057">
    <property type="entry name" value="Glu/AcGlu_kinase"/>
</dbReference>
<dbReference type="InterPro" id="IPR011529">
    <property type="entry name" value="Glu_5kinase"/>
</dbReference>
<dbReference type="InterPro" id="IPR005715">
    <property type="entry name" value="Glu_5kinase/COase_Synthase"/>
</dbReference>
<dbReference type="InterPro" id="IPR019797">
    <property type="entry name" value="Glutamate_5-kinase_CS"/>
</dbReference>
<dbReference type="InterPro" id="IPR002478">
    <property type="entry name" value="PUA"/>
</dbReference>
<dbReference type="InterPro" id="IPR015947">
    <property type="entry name" value="PUA-like_sf"/>
</dbReference>
<dbReference type="InterPro" id="IPR036974">
    <property type="entry name" value="PUA_sf"/>
</dbReference>
<dbReference type="NCBIfam" id="TIGR01027">
    <property type="entry name" value="proB"/>
    <property type="match status" value="1"/>
</dbReference>
<dbReference type="PANTHER" id="PTHR43654">
    <property type="entry name" value="GLUTAMATE 5-KINASE"/>
    <property type="match status" value="1"/>
</dbReference>
<dbReference type="PANTHER" id="PTHR43654:SF1">
    <property type="entry name" value="ISOPENTENYL PHOSPHATE KINASE"/>
    <property type="match status" value="1"/>
</dbReference>
<dbReference type="Pfam" id="PF00696">
    <property type="entry name" value="AA_kinase"/>
    <property type="match status" value="1"/>
</dbReference>
<dbReference type="Pfam" id="PF01472">
    <property type="entry name" value="PUA"/>
    <property type="match status" value="1"/>
</dbReference>
<dbReference type="PIRSF" id="PIRSF000729">
    <property type="entry name" value="GK"/>
    <property type="match status" value="1"/>
</dbReference>
<dbReference type="PRINTS" id="PR00474">
    <property type="entry name" value="GLU5KINASE"/>
</dbReference>
<dbReference type="SMART" id="SM00359">
    <property type="entry name" value="PUA"/>
    <property type="match status" value="1"/>
</dbReference>
<dbReference type="SUPFAM" id="SSF53633">
    <property type="entry name" value="Carbamate kinase-like"/>
    <property type="match status" value="1"/>
</dbReference>
<dbReference type="SUPFAM" id="SSF88697">
    <property type="entry name" value="PUA domain-like"/>
    <property type="match status" value="1"/>
</dbReference>
<dbReference type="PROSITE" id="PS00902">
    <property type="entry name" value="GLUTAMATE_5_KINASE"/>
    <property type="match status" value="1"/>
</dbReference>
<dbReference type="PROSITE" id="PS50890">
    <property type="entry name" value="PUA"/>
    <property type="match status" value="1"/>
</dbReference>
<organism>
    <name type="scientific">Bartonella henselae (strain ATCC 49882 / DSM 28221 / CCUG 30454 / Houston 1)</name>
    <name type="common">Rochalimaea henselae</name>
    <dbReference type="NCBI Taxonomy" id="283166"/>
    <lineage>
        <taxon>Bacteria</taxon>
        <taxon>Pseudomonadati</taxon>
        <taxon>Pseudomonadota</taxon>
        <taxon>Alphaproteobacteria</taxon>
        <taxon>Hyphomicrobiales</taxon>
        <taxon>Bartonellaceae</taxon>
        <taxon>Bartonella</taxon>
    </lineage>
</organism>
<sequence length="379" mass="40845">MAVGLQKLVHYKRIVIKIGSALLVDPQTGLRAEWLKSLISDVANLHQKGVEILLVSSGAIALGRTLLRLPKGALKLEESQACAALGQIELAKTYSDTLAQYGLKTGQILLTLFDTEERRRYLNARATINVLLRFGAVPVINENDTVATSEIRYGDNDRLAARVATMMGADLLILLSDIDGLYTKSPHRDPTAEFIPFIASITSDIEKMADVAHSELSRGGMKTKLDAGKIANSAGTAMIITSGKRMNPLAAIDRGERGSFFAAGEKPVNAWKTWISGHLDPSGILMIDQGAVKALESGKSLLAAGVVAIEGRFNRGDTVAIVDTNGVEIARGLVSYGKDESVRIMGRKSEEIESILGYEARSAMVHRNDMVLRCLTDSA</sequence>
<keyword id="KW-0028">Amino-acid biosynthesis</keyword>
<keyword id="KW-0067">ATP-binding</keyword>
<keyword id="KW-0963">Cytoplasm</keyword>
<keyword id="KW-0418">Kinase</keyword>
<keyword id="KW-0547">Nucleotide-binding</keyword>
<keyword id="KW-0641">Proline biosynthesis</keyword>
<keyword id="KW-0808">Transferase</keyword>
<protein>
    <recommendedName>
        <fullName evidence="1">Glutamate 5-kinase</fullName>
        <ecNumber evidence="1">2.7.2.11</ecNumber>
    </recommendedName>
    <alternativeName>
        <fullName evidence="1">Gamma-glutamyl kinase</fullName>
        <shortName evidence="1">GK</shortName>
    </alternativeName>
</protein>